<feature type="chain" id="PRO_0000419207" description="Geranylfarnesyl diphosphate synthase">
    <location>
        <begin position="1"/>
        <end position="341"/>
    </location>
</feature>
<feature type="binding site" evidence="2">
    <location>
        <position position="47"/>
    </location>
    <ligand>
        <name>isopentenyl diphosphate</name>
        <dbReference type="ChEBI" id="CHEBI:128769"/>
    </ligand>
</feature>
<feature type="binding site" evidence="2">
    <location>
        <position position="50"/>
    </location>
    <ligand>
        <name>isopentenyl diphosphate</name>
        <dbReference type="ChEBI" id="CHEBI:128769"/>
    </ligand>
</feature>
<feature type="binding site" evidence="2">
    <location>
        <position position="95"/>
    </location>
    <ligand>
        <name>isopentenyl diphosphate</name>
        <dbReference type="ChEBI" id="CHEBI:128769"/>
    </ligand>
</feature>
<feature type="binding site" evidence="2">
    <location>
        <position position="102"/>
    </location>
    <ligand>
        <name>Mg(2+)</name>
        <dbReference type="ChEBI" id="CHEBI:18420"/>
        <label>1</label>
    </ligand>
</feature>
<feature type="binding site" evidence="2">
    <location>
        <position position="102"/>
    </location>
    <ligand>
        <name>Mg(2+)</name>
        <dbReference type="ChEBI" id="CHEBI:18420"/>
        <label>2</label>
    </ligand>
</feature>
<feature type="binding site" evidence="2">
    <location>
        <position position="106"/>
    </location>
    <ligand>
        <name>Mg(2+)</name>
        <dbReference type="ChEBI" id="CHEBI:18420"/>
        <label>1</label>
    </ligand>
</feature>
<feature type="binding site" evidence="2">
    <location>
        <position position="106"/>
    </location>
    <ligand>
        <name>Mg(2+)</name>
        <dbReference type="ChEBI" id="CHEBI:18420"/>
        <label>2</label>
    </ligand>
</feature>
<feature type="binding site" evidence="1">
    <location>
        <position position="111"/>
    </location>
    <ligand>
        <name>an all-trans-polyprenyl diphosphate</name>
        <dbReference type="ChEBI" id="CHEBI:58914"/>
    </ligand>
</feature>
<feature type="binding site" evidence="2">
    <location>
        <position position="112"/>
    </location>
    <ligand>
        <name>isopentenyl diphosphate</name>
        <dbReference type="ChEBI" id="CHEBI:128769"/>
    </ligand>
</feature>
<feature type="binding site" evidence="1">
    <location>
        <position position="193"/>
    </location>
    <ligand>
        <name>an all-trans-polyprenyl diphosphate</name>
        <dbReference type="ChEBI" id="CHEBI:58914"/>
    </ligand>
</feature>
<feature type="binding site" evidence="1">
    <location>
        <position position="194"/>
    </location>
    <ligand>
        <name>an all-trans-polyprenyl diphosphate</name>
        <dbReference type="ChEBI" id="CHEBI:58914"/>
    </ligand>
</feature>
<feature type="binding site" evidence="1">
    <location>
        <position position="231"/>
    </location>
    <ligand>
        <name>an all-trans-polyprenyl diphosphate</name>
        <dbReference type="ChEBI" id="CHEBI:58914"/>
    </ligand>
</feature>
<gene>
    <name type="primary">idsA3</name>
    <name type="ordered locus">NP_3696A</name>
</gene>
<name>GFPS_NATPD</name>
<comment type="function">
    <text evidence="3">Probably involved in biosynthesis of the precursor for C25 (sesterterpanyl chain) moiety of C20-C25 diether (2-O-sesterterpanyl-3-O-phytanyl-sn-glycer) membrane lipid. Catalyzes the condensation of isopentenyl pyrophosphate with the allylic pyrophosphates to yield geranylfarnesyl diphosphate (GFPP). Geranylgeranyl diphosphate (GGPP) is the preferred substrate, but dimethylallyl diphosphate (DMAPP) and farnesyl diphosphate (FPP) can also be used as allylic substrate.</text>
</comment>
<comment type="catalytic activity">
    <reaction evidence="3">
        <text>isopentenyl diphosphate + (2E,6E,10E)-geranylgeranyl diphosphate = (2E,6E,10E,14E)-geranylfarnesyl diphosphate + diphosphate</text>
        <dbReference type="Rhea" id="RHEA:25694"/>
        <dbReference type="ChEBI" id="CHEBI:33019"/>
        <dbReference type="ChEBI" id="CHEBI:57907"/>
        <dbReference type="ChEBI" id="CHEBI:58756"/>
        <dbReference type="ChEBI" id="CHEBI:128769"/>
        <dbReference type="EC" id="2.5.1.81"/>
    </reaction>
</comment>
<comment type="cofactor">
    <cofactor evidence="4">
        <name>Mg(2+)</name>
        <dbReference type="ChEBI" id="CHEBI:18420"/>
    </cofactor>
    <text evidence="4">Binds 2 Mg(2+) ions per subunit.</text>
</comment>
<comment type="subunit">
    <text evidence="1">Homodimer.</text>
</comment>
<comment type="subcellular location">
    <subcellularLocation>
        <location evidence="4">Cytoplasm</location>
    </subcellularLocation>
</comment>
<comment type="similarity">
    <text evidence="4">Belongs to the FPP/GGPP synthase family.</text>
</comment>
<reference key="1">
    <citation type="journal article" date="2005" name="Genome Res.">
        <title>Living with two extremes: conclusions from the genome sequence of Natronomonas pharaonis.</title>
        <authorList>
            <person name="Falb M."/>
            <person name="Pfeiffer F."/>
            <person name="Palm P."/>
            <person name="Rodewald K."/>
            <person name="Hickmann V."/>
            <person name="Tittor J."/>
            <person name="Oesterhelt D."/>
        </authorList>
    </citation>
    <scope>NUCLEOTIDE SEQUENCE [LARGE SCALE GENOMIC DNA]</scope>
    <source>
        <strain>ATCC 35678 / DSM 2160 / CIP 103997 / JCM 8858 / NBRC 14720 / NCIMB 2260 / Gabara</strain>
    </source>
</reference>
<reference key="2">
    <citation type="journal article" date="1994" name="FEBS Lett.">
        <title>A novel prenyltransferase, farnesylgeranyl diphosphate synthase, from the haloalkaliphilic archaeon, Natronobacterium pharaonis.</title>
        <authorList>
            <person name="Tachibana A."/>
        </authorList>
    </citation>
    <scope>FUNCTION AS A GERANYLFARNESYL DIPHOSPHATE SYNTHASE</scope>
    <scope>CATALYTIC ACTIVITY</scope>
    <scope>SUBSTRATE SPECIFICITY</scope>
</reference>
<accession>Q3IPL1</accession>
<organism>
    <name type="scientific">Natronomonas pharaonis (strain ATCC 35678 / DSM 2160 / CIP 103997 / JCM 8858 / NBRC 14720 / NCIMB 2260 / Gabara)</name>
    <name type="common">Halobacterium pharaonis</name>
    <dbReference type="NCBI Taxonomy" id="348780"/>
    <lineage>
        <taxon>Archaea</taxon>
        <taxon>Methanobacteriati</taxon>
        <taxon>Methanobacteriota</taxon>
        <taxon>Stenosarchaea group</taxon>
        <taxon>Halobacteria</taxon>
        <taxon>Halobacteriales</taxon>
        <taxon>Haloarculaceae</taxon>
        <taxon>Natronomonas</taxon>
    </lineage>
</organism>
<sequence>MTSADHVESAIAERREIVNEAVSEQLPVQKPERLYSASRYLLDAGGKRLRPTILLLAAESLADVEPLSADYRQFPSLPGDEVDVLSAAVSIEVIQSFTLIHDDIMDDDDLRRGVPAVHREYDLETAILAGDTLYSKAFEYMLDTGAPAERSVEALDELATTCTEICEGQALDVDFENRSDVTTEEYLEMVEFKTAVLYAAAASIPAILLGSDDETVEALHGYGLDIGRAFQIQDDLLDLTAPSDELGKQRGSDLVENKRTVITLHARDQGIDVEGLVSDDPSDAEIEAAVQTLEDAGSIDFAREMALDLVTSGKERLDVLPENEARQLLEDIADFLVERSY</sequence>
<proteinExistence type="evidence at protein level"/>
<keyword id="KW-0963">Cytoplasm</keyword>
<keyword id="KW-0444">Lipid biosynthesis</keyword>
<keyword id="KW-0443">Lipid metabolism</keyword>
<keyword id="KW-0460">Magnesium</keyword>
<keyword id="KW-0479">Metal-binding</keyword>
<keyword id="KW-1185">Reference proteome</keyword>
<keyword id="KW-0808">Transferase</keyword>
<dbReference type="EC" id="2.5.1.81"/>
<dbReference type="EMBL" id="CR936257">
    <property type="protein sequence ID" value="CAI49939.1"/>
    <property type="molecule type" value="Genomic_DNA"/>
</dbReference>
<dbReference type="RefSeq" id="WP_011323557.1">
    <property type="nucleotide sequence ID" value="NC_007426.1"/>
</dbReference>
<dbReference type="SMR" id="Q3IPL1"/>
<dbReference type="STRING" id="348780.NP_3696A"/>
<dbReference type="EnsemblBacteria" id="CAI49939">
    <property type="protein sequence ID" value="CAI49939"/>
    <property type="gene ID" value="NP_3696A"/>
</dbReference>
<dbReference type="GeneID" id="3702862"/>
<dbReference type="KEGG" id="nph:NP_3696A"/>
<dbReference type="eggNOG" id="arCOG01726">
    <property type="taxonomic scope" value="Archaea"/>
</dbReference>
<dbReference type="HOGENOM" id="CLU_014015_2_1_2"/>
<dbReference type="OrthoDB" id="26738at2157"/>
<dbReference type="Proteomes" id="UP000002698">
    <property type="component" value="Chromosome"/>
</dbReference>
<dbReference type="GO" id="GO:0005737">
    <property type="term" value="C:cytoplasm"/>
    <property type="evidence" value="ECO:0007669"/>
    <property type="project" value="UniProtKB-SubCell"/>
</dbReference>
<dbReference type="GO" id="GO:0044687">
    <property type="term" value="F:geranylfarnesyl diphosphate synthase activity"/>
    <property type="evidence" value="ECO:0007669"/>
    <property type="project" value="UniProtKB-EC"/>
</dbReference>
<dbReference type="GO" id="GO:0046872">
    <property type="term" value="F:metal ion binding"/>
    <property type="evidence" value="ECO:0007669"/>
    <property type="project" value="UniProtKB-KW"/>
</dbReference>
<dbReference type="GO" id="GO:0004659">
    <property type="term" value="F:prenyltransferase activity"/>
    <property type="evidence" value="ECO:0000314"/>
    <property type="project" value="UniProtKB"/>
</dbReference>
<dbReference type="GO" id="GO:0008299">
    <property type="term" value="P:isoprenoid biosynthetic process"/>
    <property type="evidence" value="ECO:0007669"/>
    <property type="project" value="InterPro"/>
</dbReference>
<dbReference type="CDD" id="cd00685">
    <property type="entry name" value="Trans_IPPS_HT"/>
    <property type="match status" value="1"/>
</dbReference>
<dbReference type="FunFam" id="1.10.600.10:FF:000002">
    <property type="entry name" value="Octaprenyl diphosphate synthase"/>
    <property type="match status" value="1"/>
</dbReference>
<dbReference type="Gene3D" id="1.10.600.10">
    <property type="entry name" value="Farnesyl Diphosphate Synthase"/>
    <property type="match status" value="1"/>
</dbReference>
<dbReference type="InterPro" id="IPR008949">
    <property type="entry name" value="Isoprenoid_synthase_dom_sf"/>
</dbReference>
<dbReference type="InterPro" id="IPR000092">
    <property type="entry name" value="Polyprenyl_synt"/>
</dbReference>
<dbReference type="InterPro" id="IPR033749">
    <property type="entry name" value="Polyprenyl_synt_CS"/>
</dbReference>
<dbReference type="NCBIfam" id="NF040789">
    <property type="entry name" value="gerfarn_diphsyn"/>
    <property type="match status" value="1"/>
</dbReference>
<dbReference type="PANTHER" id="PTHR12001">
    <property type="entry name" value="GERANYLGERANYL PYROPHOSPHATE SYNTHASE"/>
    <property type="match status" value="1"/>
</dbReference>
<dbReference type="PANTHER" id="PTHR12001:SF85">
    <property type="entry name" value="SHORT CHAIN ISOPRENYL DIPHOSPHATE SYNTHASE"/>
    <property type="match status" value="1"/>
</dbReference>
<dbReference type="Pfam" id="PF00348">
    <property type="entry name" value="polyprenyl_synt"/>
    <property type="match status" value="1"/>
</dbReference>
<dbReference type="SFLD" id="SFLDS00005">
    <property type="entry name" value="Isoprenoid_Synthase_Type_I"/>
    <property type="match status" value="1"/>
</dbReference>
<dbReference type="SFLD" id="SFLDG01017">
    <property type="entry name" value="Polyprenyl_Transferase_Like"/>
    <property type="match status" value="1"/>
</dbReference>
<dbReference type="SUPFAM" id="SSF48576">
    <property type="entry name" value="Terpenoid synthases"/>
    <property type="match status" value="1"/>
</dbReference>
<dbReference type="PROSITE" id="PS00723">
    <property type="entry name" value="POLYPRENYL_SYNTHASE_1"/>
    <property type="match status" value="1"/>
</dbReference>
<dbReference type="PROSITE" id="PS00444">
    <property type="entry name" value="POLYPRENYL_SYNTHASE_2"/>
    <property type="match status" value="1"/>
</dbReference>
<protein>
    <recommendedName>
        <fullName>Geranylfarnesyl diphosphate synthase</fullName>
        <shortName>GFPS</shortName>
        <ecNumber>2.5.1.81</ecNumber>
    </recommendedName>
    <alternativeName>
        <fullName>Farnesylgeranyl diphosphate synthase</fullName>
        <shortName>FGPP synthase</shortName>
    </alternativeName>
</protein>
<evidence type="ECO:0000250" key="1"/>
<evidence type="ECO:0000250" key="2">
    <source>
        <dbReference type="UniProtKB" id="P14324"/>
    </source>
</evidence>
<evidence type="ECO:0000269" key="3">
    <source>
    </source>
</evidence>
<evidence type="ECO:0000305" key="4"/>